<accession>Q8MBG5</accession>
<dbReference type="EC" id="7.1.2.2"/>
<dbReference type="EMBL" id="AY100844">
    <property type="protein sequence ID" value="AAM52198.1"/>
    <property type="molecule type" value="Genomic_DNA"/>
</dbReference>
<dbReference type="GO" id="GO:0009535">
    <property type="term" value="C:chloroplast thylakoid membrane"/>
    <property type="evidence" value="ECO:0007669"/>
    <property type="project" value="TreeGrafter"/>
</dbReference>
<dbReference type="GO" id="GO:0005739">
    <property type="term" value="C:mitochondrion"/>
    <property type="evidence" value="ECO:0007669"/>
    <property type="project" value="GOC"/>
</dbReference>
<dbReference type="GO" id="GO:0045259">
    <property type="term" value="C:proton-transporting ATP synthase complex"/>
    <property type="evidence" value="ECO:0007669"/>
    <property type="project" value="UniProtKB-KW"/>
</dbReference>
<dbReference type="GO" id="GO:0005524">
    <property type="term" value="F:ATP binding"/>
    <property type="evidence" value="ECO:0007669"/>
    <property type="project" value="UniProtKB-KW"/>
</dbReference>
<dbReference type="GO" id="GO:0016887">
    <property type="term" value="F:ATP hydrolysis activity"/>
    <property type="evidence" value="ECO:0007669"/>
    <property type="project" value="InterPro"/>
</dbReference>
<dbReference type="GO" id="GO:0046933">
    <property type="term" value="F:proton-transporting ATP synthase activity, rotational mechanism"/>
    <property type="evidence" value="ECO:0007669"/>
    <property type="project" value="InterPro"/>
</dbReference>
<dbReference type="GO" id="GO:0042776">
    <property type="term" value="P:proton motive force-driven mitochondrial ATP synthesis"/>
    <property type="evidence" value="ECO:0007669"/>
    <property type="project" value="TreeGrafter"/>
</dbReference>
<dbReference type="CDD" id="cd18110">
    <property type="entry name" value="ATP-synt_F1_beta_C"/>
    <property type="match status" value="1"/>
</dbReference>
<dbReference type="CDD" id="cd18115">
    <property type="entry name" value="ATP-synt_F1_beta_N"/>
    <property type="match status" value="1"/>
</dbReference>
<dbReference type="CDD" id="cd01133">
    <property type="entry name" value="F1-ATPase_beta_CD"/>
    <property type="match status" value="1"/>
</dbReference>
<dbReference type="FunFam" id="1.10.1140.10:FF:000001">
    <property type="entry name" value="ATP synthase subunit beta"/>
    <property type="match status" value="1"/>
</dbReference>
<dbReference type="FunFam" id="3.40.50.12240:FF:000006">
    <property type="entry name" value="ATP synthase subunit beta"/>
    <property type="match status" value="1"/>
</dbReference>
<dbReference type="FunFam" id="3.40.50.300:FF:000004">
    <property type="entry name" value="ATP synthase subunit beta"/>
    <property type="match status" value="1"/>
</dbReference>
<dbReference type="FunFam" id="2.40.10.170:FF:000002">
    <property type="entry name" value="ATP synthase subunit beta, chloroplastic"/>
    <property type="match status" value="1"/>
</dbReference>
<dbReference type="Gene3D" id="2.40.10.170">
    <property type="match status" value="1"/>
</dbReference>
<dbReference type="Gene3D" id="1.10.1140.10">
    <property type="entry name" value="Bovine Mitochondrial F1-atpase, Atp Synthase Beta Chain, Chain D, domain 3"/>
    <property type="match status" value="1"/>
</dbReference>
<dbReference type="Gene3D" id="3.40.50.300">
    <property type="entry name" value="P-loop containing nucleotide triphosphate hydrolases"/>
    <property type="match status" value="1"/>
</dbReference>
<dbReference type="HAMAP" id="MF_01347">
    <property type="entry name" value="ATP_synth_beta_bact"/>
    <property type="match status" value="1"/>
</dbReference>
<dbReference type="InterPro" id="IPR003593">
    <property type="entry name" value="AAA+_ATPase"/>
</dbReference>
<dbReference type="InterPro" id="IPR055190">
    <property type="entry name" value="ATP-synt_VA_C"/>
</dbReference>
<dbReference type="InterPro" id="IPR005722">
    <property type="entry name" value="ATP_synth_F1_bsu"/>
</dbReference>
<dbReference type="InterPro" id="IPR020003">
    <property type="entry name" value="ATPase_a/bsu_AS"/>
</dbReference>
<dbReference type="InterPro" id="IPR050053">
    <property type="entry name" value="ATPase_alpha/beta_chains"/>
</dbReference>
<dbReference type="InterPro" id="IPR004100">
    <property type="entry name" value="ATPase_F1/V1/A1_a/bsu_N"/>
</dbReference>
<dbReference type="InterPro" id="IPR036121">
    <property type="entry name" value="ATPase_F1/V1/A1_a/bsu_N_sf"/>
</dbReference>
<dbReference type="InterPro" id="IPR000194">
    <property type="entry name" value="ATPase_F1/V1/A1_a/bsu_nucl-bd"/>
</dbReference>
<dbReference type="InterPro" id="IPR024034">
    <property type="entry name" value="ATPase_F1/V1_b/a_C"/>
</dbReference>
<dbReference type="InterPro" id="IPR027417">
    <property type="entry name" value="P-loop_NTPase"/>
</dbReference>
<dbReference type="NCBIfam" id="TIGR01039">
    <property type="entry name" value="atpD"/>
    <property type="match status" value="1"/>
</dbReference>
<dbReference type="PANTHER" id="PTHR15184">
    <property type="entry name" value="ATP SYNTHASE"/>
    <property type="match status" value="1"/>
</dbReference>
<dbReference type="PANTHER" id="PTHR15184:SF71">
    <property type="entry name" value="ATP SYNTHASE SUBUNIT BETA, MITOCHONDRIAL"/>
    <property type="match status" value="1"/>
</dbReference>
<dbReference type="Pfam" id="PF00006">
    <property type="entry name" value="ATP-synt_ab"/>
    <property type="match status" value="1"/>
</dbReference>
<dbReference type="Pfam" id="PF02874">
    <property type="entry name" value="ATP-synt_ab_N"/>
    <property type="match status" value="1"/>
</dbReference>
<dbReference type="Pfam" id="PF22919">
    <property type="entry name" value="ATP-synt_VA_C"/>
    <property type="match status" value="1"/>
</dbReference>
<dbReference type="SMART" id="SM00382">
    <property type="entry name" value="AAA"/>
    <property type="match status" value="1"/>
</dbReference>
<dbReference type="SUPFAM" id="SSF47917">
    <property type="entry name" value="C-terminal domain of alpha and beta subunits of F1 ATP synthase"/>
    <property type="match status" value="1"/>
</dbReference>
<dbReference type="SUPFAM" id="SSF50615">
    <property type="entry name" value="N-terminal domain of alpha and beta subunits of F1 ATP synthase"/>
    <property type="match status" value="1"/>
</dbReference>
<dbReference type="SUPFAM" id="SSF52540">
    <property type="entry name" value="P-loop containing nucleoside triphosphate hydrolases"/>
    <property type="match status" value="1"/>
</dbReference>
<dbReference type="PROSITE" id="PS00152">
    <property type="entry name" value="ATPASE_ALPHA_BETA"/>
    <property type="match status" value="1"/>
</dbReference>
<geneLocation type="plastid"/>
<name>ATPB_CUSPE</name>
<protein>
    <recommendedName>
        <fullName>ATP synthase subunit beta, plastid</fullName>
        <ecNumber>7.1.2.2</ecNumber>
    </recommendedName>
    <alternativeName>
        <fullName>ATP synthase F1 sector subunit beta</fullName>
    </alternativeName>
    <alternativeName>
        <fullName>F-ATPase subunit beta</fullName>
    </alternativeName>
</protein>
<feature type="chain" id="PRO_0000254468" description="ATP synthase subunit beta, plastid">
    <location>
        <begin position="1"/>
        <end position="487"/>
    </location>
</feature>
<feature type="binding site" evidence="1">
    <location>
        <begin position="169"/>
        <end position="176"/>
    </location>
    <ligand>
        <name>ATP</name>
        <dbReference type="ChEBI" id="CHEBI:30616"/>
    </ligand>
</feature>
<proteinExistence type="inferred from homology"/>
<evidence type="ECO:0000250" key="1"/>
<evidence type="ECO:0000305" key="2"/>
<keyword id="KW-0066">ATP synthesis</keyword>
<keyword id="KW-0067">ATP-binding</keyword>
<keyword id="KW-0139">CF(1)</keyword>
<keyword id="KW-0375">Hydrogen ion transport</keyword>
<keyword id="KW-0406">Ion transport</keyword>
<keyword id="KW-0472">Membrane</keyword>
<keyword id="KW-0547">Nucleotide-binding</keyword>
<keyword id="KW-0934">Plastid</keyword>
<keyword id="KW-1278">Translocase</keyword>
<keyword id="KW-0813">Transport</keyword>
<comment type="function">
    <text evidence="1">Produces ATP from ADP in the presence of a proton gradient across the membrane. The catalytic sites are hosted primarily by the beta subunits (By similarity).</text>
</comment>
<comment type="catalytic activity">
    <reaction>
        <text>ATP + H2O + 4 H(+)(in) = ADP + phosphate + 5 H(+)(out)</text>
        <dbReference type="Rhea" id="RHEA:57720"/>
        <dbReference type="ChEBI" id="CHEBI:15377"/>
        <dbReference type="ChEBI" id="CHEBI:15378"/>
        <dbReference type="ChEBI" id="CHEBI:30616"/>
        <dbReference type="ChEBI" id="CHEBI:43474"/>
        <dbReference type="ChEBI" id="CHEBI:456216"/>
        <dbReference type="EC" id="7.1.2.2"/>
    </reaction>
</comment>
<comment type="subunit">
    <text evidence="1">F-type ATPases have 2 components, CF(1) - the catalytic core - and CF(0) - the membrane proton channel. CF(1) has five subunits: alpha(3), beta(3), gamma(1), delta(1), epsilon(1). CF(0) has four main subunits: a(1), b(1), b'(1) and c(9-12) (By similarity).</text>
</comment>
<comment type="subcellular location">
    <subcellularLocation>
        <location evidence="2">Plastid membrane</location>
        <topology evidence="2">Peripheral membrane protein</topology>
    </subcellularLocation>
</comment>
<comment type="similarity">
    <text evidence="2">Belongs to the ATPase alpha/beta chains family.</text>
</comment>
<comment type="caution">
    <text evidence="2">Young tissue from this organism is photosynthetic and contains some thylakoids, although the photosynthetic activity does not exceed the light compensation point.</text>
</comment>
<gene>
    <name type="primary">atpB</name>
</gene>
<organism>
    <name type="scientific">Cuscuta pentagona</name>
    <name type="common">Five-angled dodder</name>
    <dbReference type="NCBI Taxonomy" id="112407"/>
    <lineage>
        <taxon>Eukaryota</taxon>
        <taxon>Viridiplantae</taxon>
        <taxon>Streptophyta</taxon>
        <taxon>Embryophyta</taxon>
        <taxon>Tracheophyta</taxon>
        <taxon>Spermatophyta</taxon>
        <taxon>Magnoliopsida</taxon>
        <taxon>eudicotyledons</taxon>
        <taxon>Gunneridae</taxon>
        <taxon>Pentapetalae</taxon>
        <taxon>asterids</taxon>
        <taxon>lamiids</taxon>
        <taxon>Solanales</taxon>
        <taxon>Convolvulaceae</taxon>
        <taxon>Cuscuteae</taxon>
        <taxon>Cuscuta</taxon>
        <taxon>Cuscuta subgen. Grammica</taxon>
        <taxon>Cuscuta sect. Cleistogrammica</taxon>
    </lineage>
</organism>
<sequence length="487" mass="53154">MRLTPNYDYEVSSIDKKKRGYIVQIIGPVLDVPFSPGMXPSIYNALVVQGRHKQEPNVTCEVQQLLGNNRVRAVAMSDTDGLMRGMEVIDTGTPISVPVGGSTLGRIFNVLGEPVDQLGPVETNQLSPIHRSAPPFLKLDTRLSIFETGIKVVDLLAPYRRGGKVGLFGGAGVGKTVLIMELINNIAKAYGGVSVFGGVGERTREGNDLYMEMKESGVINQQKLAESKVALVYGQMNEPPGARMRVGLTALTMAEYFRDVNRQDVLLFIDNIFRFVQAGSEVSALLGRMPSAVGYQPTLSTEMGSLQERITSTKEGSITSIQAVYVPADDLTDPAPATTFAHLDATTVLSRSLAAKGIYPAVDPLDSTSMMLQPQIVGKQHYKTAQRVKQTLQRYKELQDIIAILGLDELSDDDRLTVARARKIERFLSQPFFVAEIFTGSPGKYVSLAETIRGCTLILSGEFDDLPEQAFYLVGTIDEVNAKAMLE</sequence>
<reference key="1">
    <citation type="journal article" date="2002" name="Am. J. Bot.">
        <title>Monophyly of the Convolvulaceae and circumscription of their major lineages based on DNA sequences of multiple chloroplast loci.</title>
        <authorList>
            <person name="Stefanovic S."/>
            <person name="Krueger L."/>
            <person name="Olmstead R.G."/>
        </authorList>
        <dbReference type="AGRICOLA" id="IND23320510"/>
    </citation>
    <scope>NUCLEOTIDE SEQUENCE [GENOMIC DNA]</scope>
</reference>